<dbReference type="EMBL" id="AE015927">
    <property type="protein sequence ID" value="AAO37060.1"/>
    <property type="molecule type" value="Genomic_DNA"/>
</dbReference>
<dbReference type="RefSeq" id="WP_011100721.1">
    <property type="nucleotide sequence ID" value="NC_004557.1"/>
</dbReference>
<dbReference type="SMR" id="Q890N6"/>
<dbReference type="STRING" id="212717.CTC_02606"/>
<dbReference type="GeneID" id="24254544"/>
<dbReference type="KEGG" id="ctc:CTC_02606"/>
<dbReference type="HOGENOM" id="CLU_104295_1_2_9"/>
<dbReference type="OrthoDB" id="9802366at2"/>
<dbReference type="Proteomes" id="UP000001412">
    <property type="component" value="Chromosome"/>
</dbReference>
<dbReference type="GO" id="GO:0015935">
    <property type="term" value="C:small ribosomal subunit"/>
    <property type="evidence" value="ECO:0007669"/>
    <property type="project" value="InterPro"/>
</dbReference>
<dbReference type="GO" id="GO:0019843">
    <property type="term" value="F:rRNA binding"/>
    <property type="evidence" value="ECO:0007669"/>
    <property type="project" value="UniProtKB-UniRule"/>
</dbReference>
<dbReference type="GO" id="GO:0003735">
    <property type="term" value="F:structural constituent of ribosome"/>
    <property type="evidence" value="ECO:0007669"/>
    <property type="project" value="InterPro"/>
</dbReference>
<dbReference type="GO" id="GO:0000049">
    <property type="term" value="F:tRNA binding"/>
    <property type="evidence" value="ECO:0007669"/>
    <property type="project" value="UniProtKB-UniRule"/>
</dbReference>
<dbReference type="GO" id="GO:0006412">
    <property type="term" value="P:translation"/>
    <property type="evidence" value="ECO:0007669"/>
    <property type="project" value="UniProtKB-UniRule"/>
</dbReference>
<dbReference type="CDD" id="cd03368">
    <property type="entry name" value="Ribosomal_S12"/>
    <property type="match status" value="1"/>
</dbReference>
<dbReference type="FunFam" id="2.40.50.140:FF:000001">
    <property type="entry name" value="30S ribosomal protein S12"/>
    <property type="match status" value="1"/>
</dbReference>
<dbReference type="Gene3D" id="2.40.50.140">
    <property type="entry name" value="Nucleic acid-binding proteins"/>
    <property type="match status" value="1"/>
</dbReference>
<dbReference type="HAMAP" id="MF_00403_B">
    <property type="entry name" value="Ribosomal_uS12_B"/>
    <property type="match status" value="1"/>
</dbReference>
<dbReference type="InterPro" id="IPR012340">
    <property type="entry name" value="NA-bd_OB-fold"/>
</dbReference>
<dbReference type="InterPro" id="IPR006032">
    <property type="entry name" value="Ribosomal_uS12"/>
</dbReference>
<dbReference type="InterPro" id="IPR005679">
    <property type="entry name" value="Ribosomal_uS12_bac"/>
</dbReference>
<dbReference type="NCBIfam" id="TIGR00981">
    <property type="entry name" value="rpsL_bact"/>
    <property type="match status" value="1"/>
</dbReference>
<dbReference type="PANTHER" id="PTHR11652">
    <property type="entry name" value="30S RIBOSOMAL PROTEIN S12 FAMILY MEMBER"/>
    <property type="match status" value="1"/>
</dbReference>
<dbReference type="Pfam" id="PF00164">
    <property type="entry name" value="Ribosom_S12_S23"/>
    <property type="match status" value="1"/>
</dbReference>
<dbReference type="PIRSF" id="PIRSF002133">
    <property type="entry name" value="Ribosomal_S12/S23"/>
    <property type="match status" value="1"/>
</dbReference>
<dbReference type="PRINTS" id="PR01034">
    <property type="entry name" value="RIBOSOMALS12"/>
</dbReference>
<dbReference type="SUPFAM" id="SSF50249">
    <property type="entry name" value="Nucleic acid-binding proteins"/>
    <property type="match status" value="1"/>
</dbReference>
<dbReference type="PROSITE" id="PS00055">
    <property type="entry name" value="RIBOSOMAL_S12"/>
    <property type="match status" value="1"/>
</dbReference>
<organism>
    <name type="scientific">Clostridium tetani (strain Massachusetts / E88)</name>
    <dbReference type="NCBI Taxonomy" id="212717"/>
    <lineage>
        <taxon>Bacteria</taxon>
        <taxon>Bacillati</taxon>
        <taxon>Bacillota</taxon>
        <taxon>Clostridia</taxon>
        <taxon>Eubacteriales</taxon>
        <taxon>Clostridiaceae</taxon>
        <taxon>Clostridium</taxon>
    </lineage>
</organism>
<name>RS12_CLOTE</name>
<comment type="function">
    <text evidence="2">With S4 and S5 plays an important role in translational accuracy.</text>
</comment>
<comment type="function">
    <text evidence="2">Interacts with and stabilizes bases of the 16S rRNA that are involved in tRNA selection in the A site and with the mRNA backbone. Located at the interface of the 30S and 50S subunits, it traverses the body of the 30S subunit contacting proteins on the other side and probably holding the rRNA structure together. The combined cluster of proteins S8, S12 and S17 appears to hold together the shoulder and platform of the 30S subunit.</text>
</comment>
<comment type="subunit">
    <text evidence="2">Part of the 30S ribosomal subunit. Contacts proteins S8 and S17. May interact with IF1 in the 30S initiation complex.</text>
</comment>
<comment type="similarity">
    <text evidence="2">Belongs to the universal ribosomal protein uS12 family.</text>
</comment>
<protein>
    <recommendedName>
        <fullName evidence="2">Small ribosomal subunit protein uS12</fullName>
    </recommendedName>
    <alternativeName>
        <fullName evidence="4">30S ribosomal protein S12</fullName>
    </alternativeName>
</protein>
<evidence type="ECO:0000250" key="1"/>
<evidence type="ECO:0000255" key="2">
    <source>
        <dbReference type="HAMAP-Rule" id="MF_00403"/>
    </source>
</evidence>
<evidence type="ECO:0000256" key="3">
    <source>
        <dbReference type="SAM" id="MobiDB-lite"/>
    </source>
</evidence>
<evidence type="ECO:0000305" key="4"/>
<sequence>MPTINQLVRKSRKTVKAQSDSPALKNCPQRRGVCTVVKTTTPKKPNSALRKIARVRLTNGYEVSAYIPGVGHNLQEHSVVLIRGGRVKDLPGVRYHIVRGALDSAGVATRMQSRSKYGAKKPKQK</sequence>
<keyword id="KW-0488">Methylation</keyword>
<keyword id="KW-1185">Reference proteome</keyword>
<keyword id="KW-0687">Ribonucleoprotein</keyword>
<keyword id="KW-0689">Ribosomal protein</keyword>
<keyword id="KW-0694">RNA-binding</keyword>
<keyword id="KW-0699">rRNA-binding</keyword>
<keyword id="KW-0820">tRNA-binding</keyword>
<accession>Q890N6</accession>
<proteinExistence type="inferred from homology"/>
<reference key="1">
    <citation type="journal article" date="2003" name="Proc. Natl. Acad. Sci. U.S.A.">
        <title>The genome sequence of Clostridium tetani, the causative agent of tetanus disease.</title>
        <authorList>
            <person name="Brueggemann H."/>
            <person name="Baeumer S."/>
            <person name="Fricke W.F."/>
            <person name="Wiezer A."/>
            <person name="Liesegang H."/>
            <person name="Decker I."/>
            <person name="Herzberg C."/>
            <person name="Martinez-Arias R."/>
            <person name="Merkl R."/>
            <person name="Henne A."/>
            <person name="Gottschalk G."/>
        </authorList>
    </citation>
    <scope>NUCLEOTIDE SEQUENCE [LARGE SCALE GENOMIC DNA]</scope>
    <source>
        <strain>Massachusetts / E88</strain>
    </source>
</reference>
<gene>
    <name evidence="2" type="primary">rpsL</name>
    <name type="ordered locus">CTC_02606</name>
</gene>
<feature type="chain" id="PRO_0000146211" description="Small ribosomal subunit protein uS12">
    <location>
        <begin position="1"/>
        <end position="125"/>
    </location>
</feature>
<feature type="region of interest" description="Disordered" evidence="3">
    <location>
        <begin position="1"/>
        <end position="26"/>
    </location>
</feature>
<feature type="modified residue" description="3-methylthioaspartic acid" evidence="1">
    <location>
        <position position="89"/>
    </location>
</feature>